<proteinExistence type="evidence at protein level"/>
<reference key="1">
    <citation type="journal article" date="2000" name="J. Comp. Neurol.">
        <title>Tagma-specific distribution of FXPRLamides in the nervous system of the American cockroach.</title>
        <authorList>
            <person name="Predel R."/>
            <person name="Eckert M."/>
        </authorList>
    </citation>
    <scope>PROTEIN SEQUENCE</scope>
    <scope>AMIDATION AT LEU-14</scope>
    <scope>FUNCTION</scope>
    <scope>TISSUE SPECIFICITY</scope>
    <scope>MASS SPECTROMETRY</scope>
    <source>
        <tissue>Abdominal perisympathetic organs</tissue>
        <tissue>Corpora cardiaca</tissue>
    </source>
</reference>
<evidence type="ECO:0000269" key="1">
    <source>
    </source>
</evidence>
<evidence type="ECO:0000305" key="2"/>
<dbReference type="GO" id="GO:0005576">
    <property type="term" value="C:extracellular region"/>
    <property type="evidence" value="ECO:0007669"/>
    <property type="project" value="UniProtKB-SubCell"/>
</dbReference>
<dbReference type="GO" id="GO:0005184">
    <property type="term" value="F:neuropeptide hormone activity"/>
    <property type="evidence" value="ECO:0007669"/>
    <property type="project" value="InterPro"/>
</dbReference>
<dbReference type="GO" id="GO:0007218">
    <property type="term" value="P:neuropeptide signaling pathway"/>
    <property type="evidence" value="ECO:0007669"/>
    <property type="project" value="UniProtKB-KW"/>
</dbReference>
<dbReference type="InterPro" id="IPR001484">
    <property type="entry name" value="Pyrokinin_CS"/>
</dbReference>
<dbReference type="PROSITE" id="PS00539">
    <property type="entry name" value="PYROKININ"/>
    <property type="match status" value="1"/>
</dbReference>
<organism>
    <name type="scientific">Periplaneta americana</name>
    <name type="common">American cockroach</name>
    <name type="synonym">Blatta americana</name>
    <dbReference type="NCBI Taxonomy" id="6978"/>
    <lineage>
        <taxon>Eukaryota</taxon>
        <taxon>Metazoa</taxon>
        <taxon>Ecdysozoa</taxon>
        <taxon>Arthropoda</taxon>
        <taxon>Hexapoda</taxon>
        <taxon>Insecta</taxon>
        <taxon>Pterygota</taxon>
        <taxon>Neoptera</taxon>
        <taxon>Polyneoptera</taxon>
        <taxon>Dictyoptera</taxon>
        <taxon>Blattodea</taxon>
        <taxon>Blattoidea</taxon>
        <taxon>Blattidae</taxon>
        <taxon>Blattinae</taxon>
        <taxon>Periplaneta</taxon>
    </lineage>
</organism>
<name>PPK6_PERAM</name>
<sequence length="14" mass="1592">SESEVPGMWFGPRL</sequence>
<comment type="function">
    <text evidence="1">Shows a weakly myoactive action.</text>
</comment>
<comment type="subcellular location">
    <subcellularLocation>
        <location>Secreted</location>
    </subcellularLocation>
</comment>
<comment type="tissue specificity">
    <text evidence="1">Corpora alata and to a lesser extent in abdominal perisympathetic organs.</text>
</comment>
<comment type="mass spectrometry" mass="1590.8" method="MALDI" evidence="1"/>
<comment type="similarity">
    <text evidence="2">Belongs to the pyrokinin family.</text>
</comment>
<keyword id="KW-0027">Amidation</keyword>
<keyword id="KW-0903">Direct protein sequencing</keyword>
<keyword id="KW-0527">Neuropeptide</keyword>
<keyword id="KW-0964">Secreted</keyword>
<protein>
    <recommendedName>
        <fullName>Pyrokinin-6</fullName>
        <shortName>Pea-PK-6</shortName>
    </recommendedName>
    <alternativeName>
        <fullName>FXPRL-amide</fullName>
    </alternativeName>
</protein>
<feature type="peptide" id="PRO_0000044359" description="Pyrokinin-6">
    <location>
        <begin position="1"/>
        <end position="14"/>
    </location>
</feature>
<feature type="modified residue" description="Leucine amide" evidence="1">
    <location>
        <position position="14"/>
    </location>
</feature>
<accession>P82693</accession>